<name>ATP6_COXB1</name>
<organism>
    <name type="scientific">Coxiella burnetii (strain CbuK_Q154)</name>
    <name type="common">Coxiella burnetii (strain Q154)</name>
    <dbReference type="NCBI Taxonomy" id="434924"/>
    <lineage>
        <taxon>Bacteria</taxon>
        <taxon>Pseudomonadati</taxon>
        <taxon>Pseudomonadota</taxon>
        <taxon>Gammaproteobacteria</taxon>
        <taxon>Legionellales</taxon>
        <taxon>Coxiellaceae</taxon>
        <taxon>Coxiella</taxon>
    </lineage>
</organism>
<dbReference type="EMBL" id="CP001020">
    <property type="protein sequence ID" value="ACJ19374.1"/>
    <property type="molecule type" value="Genomic_DNA"/>
</dbReference>
<dbReference type="RefSeq" id="WP_005770029.1">
    <property type="nucleotide sequence ID" value="NC_011528.1"/>
</dbReference>
<dbReference type="SMR" id="B6J957"/>
<dbReference type="KEGG" id="cbc:CbuK_0047"/>
<dbReference type="HOGENOM" id="CLU_041018_1_0_6"/>
<dbReference type="GO" id="GO:0005886">
    <property type="term" value="C:plasma membrane"/>
    <property type="evidence" value="ECO:0007669"/>
    <property type="project" value="UniProtKB-SubCell"/>
</dbReference>
<dbReference type="GO" id="GO:0045259">
    <property type="term" value="C:proton-transporting ATP synthase complex"/>
    <property type="evidence" value="ECO:0007669"/>
    <property type="project" value="UniProtKB-KW"/>
</dbReference>
<dbReference type="GO" id="GO:0046933">
    <property type="term" value="F:proton-transporting ATP synthase activity, rotational mechanism"/>
    <property type="evidence" value="ECO:0007669"/>
    <property type="project" value="UniProtKB-UniRule"/>
</dbReference>
<dbReference type="GO" id="GO:0042777">
    <property type="term" value="P:proton motive force-driven plasma membrane ATP synthesis"/>
    <property type="evidence" value="ECO:0007669"/>
    <property type="project" value="TreeGrafter"/>
</dbReference>
<dbReference type="CDD" id="cd00310">
    <property type="entry name" value="ATP-synt_Fo_a_6"/>
    <property type="match status" value="1"/>
</dbReference>
<dbReference type="FunFam" id="1.20.120.220:FF:000002">
    <property type="entry name" value="ATP synthase subunit a"/>
    <property type="match status" value="1"/>
</dbReference>
<dbReference type="Gene3D" id="1.20.120.220">
    <property type="entry name" value="ATP synthase, F0 complex, subunit A"/>
    <property type="match status" value="1"/>
</dbReference>
<dbReference type="HAMAP" id="MF_01393">
    <property type="entry name" value="ATP_synth_a_bact"/>
    <property type="match status" value="1"/>
</dbReference>
<dbReference type="InterPro" id="IPR045082">
    <property type="entry name" value="ATP_syn_F0_a_bact/chloroplast"/>
</dbReference>
<dbReference type="InterPro" id="IPR000568">
    <property type="entry name" value="ATP_synth_F0_asu"/>
</dbReference>
<dbReference type="InterPro" id="IPR023011">
    <property type="entry name" value="ATP_synth_F0_asu_AS"/>
</dbReference>
<dbReference type="InterPro" id="IPR035908">
    <property type="entry name" value="F0_ATP_A_sf"/>
</dbReference>
<dbReference type="NCBIfam" id="TIGR01131">
    <property type="entry name" value="ATP_synt_6_or_A"/>
    <property type="match status" value="1"/>
</dbReference>
<dbReference type="NCBIfam" id="NF004477">
    <property type="entry name" value="PRK05815.1-1"/>
    <property type="match status" value="1"/>
</dbReference>
<dbReference type="PANTHER" id="PTHR42823">
    <property type="entry name" value="ATP SYNTHASE SUBUNIT A, CHLOROPLASTIC"/>
    <property type="match status" value="1"/>
</dbReference>
<dbReference type="PANTHER" id="PTHR42823:SF3">
    <property type="entry name" value="ATP SYNTHASE SUBUNIT A, CHLOROPLASTIC"/>
    <property type="match status" value="1"/>
</dbReference>
<dbReference type="Pfam" id="PF00119">
    <property type="entry name" value="ATP-synt_A"/>
    <property type="match status" value="1"/>
</dbReference>
<dbReference type="PRINTS" id="PR00123">
    <property type="entry name" value="ATPASEA"/>
</dbReference>
<dbReference type="SUPFAM" id="SSF81336">
    <property type="entry name" value="F1F0 ATP synthase subunit A"/>
    <property type="match status" value="1"/>
</dbReference>
<dbReference type="PROSITE" id="PS00449">
    <property type="entry name" value="ATPASE_A"/>
    <property type="match status" value="1"/>
</dbReference>
<feature type="chain" id="PRO_1000145266" description="ATP synthase subunit a">
    <location>
        <begin position="1"/>
        <end position="264"/>
    </location>
</feature>
<feature type="transmembrane region" description="Helical" evidence="1">
    <location>
        <begin position="39"/>
        <end position="59"/>
    </location>
</feature>
<feature type="transmembrane region" description="Helical" evidence="1">
    <location>
        <begin position="97"/>
        <end position="117"/>
    </location>
</feature>
<feature type="transmembrane region" description="Helical" evidence="1">
    <location>
        <begin position="139"/>
        <end position="159"/>
    </location>
</feature>
<feature type="transmembrane region" description="Helical" evidence="1">
    <location>
        <begin position="205"/>
        <end position="225"/>
    </location>
</feature>
<feature type="transmembrane region" description="Helical" evidence="1">
    <location>
        <begin position="239"/>
        <end position="259"/>
    </location>
</feature>
<keyword id="KW-0066">ATP synthesis</keyword>
<keyword id="KW-0997">Cell inner membrane</keyword>
<keyword id="KW-1003">Cell membrane</keyword>
<keyword id="KW-0138">CF(0)</keyword>
<keyword id="KW-0375">Hydrogen ion transport</keyword>
<keyword id="KW-0406">Ion transport</keyword>
<keyword id="KW-0472">Membrane</keyword>
<keyword id="KW-0812">Transmembrane</keyword>
<keyword id="KW-1133">Transmembrane helix</keyword>
<keyword id="KW-0813">Transport</keyword>
<gene>
    <name evidence="1" type="primary">atpB</name>
    <name type="ordered locus">CbuK_0047</name>
</gene>
<accession>B6J957</accession>
<proteinExistence type="inferred from homology"/>
<protein>
    <recommendedName>
        <fullName evidence="1">ATP synthase subunit a</fullName>
    </recommendedName>
    <alternativeName>
        <fullName evidence="1">ATP synthase F0 sector subunit a</fullName>
    </alternativeName>
    <alternativeName>
        <fullName evidence="1">F-ATPase subunit 6</fullName>
    </alternativeName>
</protein>
<reference key="1">
    <citation type="journal article" date="2009" name="Infect. Immun.">
        <title>Comparative genomics reveal extensive transposon-mediated genomic plasticity and diversity among potential effector proteins within the genus Coxiella.</title>
        <authorList>
            <person name="Beare P.A."/>
            <person name="Unsworth N."/>
            <person name="Andoh M."/>
            <person name="Voth D.E."/>
            <person name="Omsland A."/>
            <person name="Gilk S.D."/>
            <person name="Williams K.P."/>
            <person name="Sobral B.W."/>
            <person name="Kupko J.J. III"/>
            <person name="Porcella S.F."/>
            <person name="Samuel J.E."/>
            <person name="Heinzen R.A."/>
        </authorList>
    </citation>
    <scope>NUCLEOTIDE SEQUENCE [LARGE SCALE GENOMIC DNA]</scope>
    <source>
        <strain>CbuK_Q154</strain>
    </source>
</reference>
<comment type="function">
    <text evidence="1">Key component of the proton channel; it plays a direct role in the translocation of protons across the membrane.</text>
</comment>
<comment type="subunit">
    <text evidence="1">F-type ATPases have 2 components, CF(1) - the catalytic core - and CF(0) - the membrane proton channel. CF(1) has five subunits: alpha(3), beta(3), gamma(1), delta(1), epsilon(1). CF(0) has three main subunits: a(1), b(2) and c(9-12). The alpha and beta chains form an alternating ring which encloses part of the gamma chain. CF(1) is attached to CF(0) by a central stalk formed by the gamma and epsilon chains, while a peripheral stalk is formed by the delta and b chains.</text>
</comment>
<comment type="subcellular location">
    <subcellularLocation>
        <location evidence="1">Cell inner membrane</location>
        <topology evidence="1">Multi-pass membrane protein</topology>
    </subcellularLocation>
</comment>
<comment type="similarity">
    <text evidence="1">Belongs to the ATPase A chain family.</text>
</comment>
<sequence>MYAQPKLTSAEYVQHHMSHWKLNLHNFTFTDGGFWTLNLDTLIISVVLGALFILIFYIVARRATASVPGKWQNAIEMAVEAVDGTVKDSFHGDRSLVAPLALTIFIWVFLMNFMDLVPVDLIPRLFQMGGVEHFKAVPTADPTLTFAMSITVFVLVIFYNFKMKGAIGLGKEVLSRPFGWYLMPINVIFRLIDEGVKPISLALRLFGNLFAGELIFILIALLPWWSQFTLGMVWTLFHLLVITVQAFIFMMLTVVYISLAAESH</sequence>
<evidence type="ECO:0000255" key="1">
    <source>
        <dbReference type="HAMAP-Rule" id="MF_01393"/>
    </source>
</evidence>